<sequence>MQMKYLIPIFFLVLIVADHCHAFLGMIPGLIGGLISAFKGRRKRDITSQIEQYRNLQKREAELEDILANLPVY</sequence>
<keyword id="KW-0044">Antibiotic</keyword>
<keyword id="KW-0929">Antimicrobial</keyword>
<keyword id="KW-0165">Cleavage on pair of basic residues</keyword>
<keyword id="KW-0295">Fungicide</keyword>
<keyword id="KW-0964">Secreted</keyword>
<keyword id="KW-0732">Signal</keyword>
<name>NDB4S_TITCO</name>
<evidence type="ECO:0000250" key="1">
    <source>
        <dbReference type="UniProtKB" id="S6D3A7"/>
    </source>
</evidence>
<evidence type="ECO:0000255" key="2"/>
<evidence type="ECO:0000269" key="3">
    <source>
    </source>
</evidence>
<evidence type="ECO:0000305" key="4"/>
<evidence type="ECO:0000305" key="5">
    <source>
    </source>
</evidence>
<protein>
    <recommendedName>
        <fullName>Putative antimicrobial peptide clone 4</fullName>
    </recommendedName>
    <alternativeName>
        <fullName evidence="1">Non-disulfide-bridged peptide 4.23-like</fullName>
        <shortName evidence="1">NDBP-4.23-like</shortName>
    </alternativeName>
</protein>
<reference key="1">
    <citation type="journal article" date="2005" name="Toxicon">
        <title>The Brazilian scorpion Tityus costatus Karsch: genes, peptides and function.</title>
        <authorList>
            <person name="Diego-Garcia E."/>
            <person name="Batista C.V.F."/>
            <person name="Garcia-Gomez B.I."/>
            <person name="Lucas S."/>
            <person name="Candido D.M."/>
            <person name="Gomez-Lagunas F."/>
            <person name="Possani L.D."/>
        </authorList>
    </citation>
    <scope>NUCLEOTIDE SEQUENCE [MRNA]</scope>
    <source>
        <tissue>Venom gland</tissue>
    </source>
</reference>
<reference key="2">
    <citation type="journal article" date="2016" name="Front. Microbiol.">
        <title>Activity of scorpion venom-derived antifungal peptides against planktonic cells of Candida spp. and Cryptococcus neoformans and Candida albicans biofilms.</title>
        <authorList>
            <person name="Guilhelmelli F."/>
            <person name="Vilela N."/>
            <person name="Smidt K.S."/>
            <person name="de Oliveira M.A."/>
            <person name="da Cunha Morales Alvares A."/>
            <person name="Rigonatto M.C."/>
            <person name="da Silva Costa P.H."/>
            <person name="Tavares A.H."/>
            <person name="de Freitas S.M."/>
            <person name="Nicola A.M."/>
            <person name="Franco O.L."/>
            <person name="Derengowski L.D."/>
            <person name="Schwartz E.F."/>
            <person name="Mortari M.R."/>
            <person name="Bocca A.L."/>
            <person name="Albuquerque P."/>
            <person name="Silva-Pereira I."/>
        </authorList>
    </citation>
    <scope>FUNCTION</scope>
    <scope>SYNTHESIS OF 23-39</scope>
</reference>
<dbReference type="EMBL" id="AY740686">
    <property type="protein sequence ID" value="AAW72456.1"/>
    <property type="molecule type" value="mRNA"/>
</dbReference>
<dbReference type="SMR" id="Q5G8B5"/>
<dbReference type="GO" id="GO:0005576">
    <property type="term" value="C:extracellular region"/>
    <property type="evidence" value="ECO:0007669"/>
    <property type="project" value="UniProtKB-SubCell"/>
</dbReference>
<dbReference type="GO" id="GO:0042742">
    <property type="term" value="P:defense response to bacterium"/>
    <property type="evidence" value="ECO:0007669"/>
    <property type="project" value="UniProtKB-KW"/>
</dbReference>
<dbReference type="GO" id="GO:0050832">
    <property type="term" value="P:defense response to fungus"/>
    <property type="evidence" value="ECO:0007669"/>
    <property type="project" value="UniProtKB-KW"/>
</dbReference>
<dbReference type="GO" id="GO:0031640">
    <property type="term" value="P:killing of cells of another organism"/>
    <property type="evidence" value="ECO:0007669"/>
    <property type="project" value="UniProtKB-KW"/>
</dbReference>
<comment type="function">
    <text evidence="1 3">Antimicrobial peptide (By similarity) (PubMed:27917162). Has a high antibacterial activity against the Gram-positive bacterium S.aureus (MIC=5-17.30 uM), the methicillin-resistant S.aureus (MRSA) (MIC=17.30 uM), and E.faecalis (MIC=69.23 uM) (By similarity). Has antifungal activity against Candida spp. and one Cryptococcus neoformans strains with MICs values ranging from 6.25 to 100 uM (PubMed:27917162). Also shows an inhibitory activity on C.albicans biofilms at high concentrations (PubMed:27917162). Has a moderate hemolytic potency (18% at 20 uM) (By similarity). Also inhibits the growth of the five cancer cell lines tested (By similarity). In the model of polymicrobial sepsis, it exhibits an antibiotic effect, reducing the levels of microorganisms in the infectious focus and the inflammatory responses in the lung and cecum of septic animals (By similarity).</text>
</comment>
<comment type="subcellular location">
    <subcellularLocation>
        <location evidence="5">Secreted</location>
    </subcellularLocation>
</comment>
<comment type="tissue specificity">
    <text evidence="5">Expressed by the venom gland.</text>
</comment>
<comment type="miscellaneous">
    <text evidence="4">The primary structure of the mature peptide is identical to that of NDBP4.23 from Tityus serrulatus (AC S6D3A7).</text>
</comment>
<comment type="miscellaneous">
    <text evidence="3">Negative results: does not show antifungal activity against Candida glabrata (ATCC90030) (MIC&gt;400 uM).</text>
</comment>
<comment type="similarity">
    <text evidence="4">Belongs to the non-disulfide-bridged peptide (NDBP) superfamily. Short antimicrobial peptide (group 4) family.</text>
</comment>
<organism>
    <name type="scientific">Tityus costatus</name>
    <name type="common">Brazilian scorpion</name>
    <dbReference type="NCBI Taxonomy" id="309814"/>
    <lineage>
        <taxon>Eukaryota</taxon>
        <taxon>Metazoa</taxon>
        <taxon>Ecdysozoa</taxon>
        <taxon>Arthropoda</taxon>
        <taxon>Chelicerata</taxon>
        <taxon>Arachnida</taxon>
        <taxon>Scorpiones</taxon>
        <taxon>Buthida</taxon>
        <taxon>Buthoidea</taxon>
        <taxon>Buthidae</taxon>
        <taxon>Tityus</taxon>
    </lineage>
</organism>
<proteinExistence type="inferred from homology"/>
<feature type="signal peptide" evidence="2">
    <location>
        <begin position="1"/>
        <end position="22"/>
    </location>
</feature>
<feature type="peptide" id="PRO_0000231509" description="Putative antimicrobial peptide clone 4" evidence="5">
    <location>
        <begin position="23"/>
        <end position="39"/>
    </location>
</feature>
<feature type="propeptide" id="PRO_0000231510" evidence="5">
    <location>
        <begin position="45"/>
        <end position="73"/>
    </location>
</feature>
<accession>Q5G8B5</accession>